<sequence length="424" mass="47480">MATPMVEDTSSFEEDQLASMSTEDITRATRLLDNEIRILKEDAQRTNLECDSYKEKIKENQEKIKLNKQLPYLVGNIVEILEMNPEDDAEEDGANIDLDSQRKGKCVVLKTSTRQTIFLPVVGLVDPDSLKPGDLVGVNKDSYLILDTLPSEYDSRVKAMEVDEKPTEDYNDIGGLEKQIQELVEAIVLPMTHKERFEKLGVRPPKGVLLYGPPGTGKTLMARACAAQTNATFLKLAGPQLVQMFIGDGAKLVRDAFQLAKEKAPCIIFIDEIDAIGTKRFDSEVSGDREVQRTMLELLNQLDGFSSDERIKVIAATNRADILDPALMRSGRLDRKIEFPHPTEEARARILQIHSRKMNVHPDVNFEELARSTDDFNGAQLKAVCVEAGMLALRRDATEVNHEDFNEGIIQVQAKKKASLNYYA</sequence>
<name>PS6AA_ARATH</name>
<keyword id="KW-0007">Acetylation</keyword>
<keyword id="KW-0067">ATP-binding</keyword>
<keyword id="KW-0963">Cytoplasm</keyword>
<keyword id="KW-1017">Isopeptide bond</keyword>
<keyword id="KW-0547">Nucleotide-binding</keyword>
<keyword id="KW-0539">Nucleus</keyword>
<keyword id="KW-0597">Phosphoprotein</keyword>
<keyword id="KW-0647">Proteasome</keyword>
<keyword id="KW-1185">Reference proteome</keyword>
<keyword id="KW-0346">Stress response</keyword>
<keyword id="KW-0832">Ubl conjugation</keyword>
<gene>
    <name evidence="11" type="primary">RPT5A</name>
    <name evidence="12" type="synonym">ATS6A.2</name>
    <name evidence="13" type="synonym">TBP1</name>
    <name evidence="14" type="ordered locus">At3g05530</name>
    <name evidence="15" type="ORF">F22F7.1</name>
</gene>
<evidence type="ECO:0000250" key="1">
    <source>
        <dbReference type="UniProtKB" id="Q9SEI3"/>
    </source>
</evidence>
<evidence type="ECO:0000250" key="2">
    <source>
        <dbReference type="UniProtKB" id="Q9SEI4"/>
    </source>
</evidence>
<evidence type="ECO:0000255" key="3"/>
<evidence type="ECO:0000256" key="4">
    <source>
        <dbReference type="SAM" id="MobiDB-lite"/>
    </source>
</evidence>
<evidence type="ECO:0000269" key="5">
    <source>
    </source>
</evidence>
<evidence type="ECO:0000269" key="6">
    <source>
    </source>
</evidence>
<evidence type="ECO:0000269" key="7">
    <source>
    </source>
</evidence>
<evidence type="ECO:0000269" key="8">
    <source>
    </source>
</evidence>
<evidence type="ECO:0000269" key="9">
    <source>
    </source>
</evidence>
<evidence type="ECO:0000269" key="10">
    <source>
    </source>
</evidence>
<evidence type="ECO:0000303" key="11">
    <source>
    </source>
</evidence>
<evidence type="ECO:0000303" key="12">
    <source>
    </source>
</evidence>
<evidence type="ECO:0000305" key="13"/>
<evidence type="ECO:0000312" key="14">
    <source>
        <dbReference type="Araport" id="AT3G05530"/>
    </source>
</evidence>
<evidence type="ECO:0000312" key="15">
    <source>
        <dbReference type="EMBL" id="AAF64530.1"/>
    </source>
</evidence>
<evidence type="ECO:0007744" key="16">
    <source>
    </source>
</evidence>
<reference key="1">
    <citation type="journal article" date="1999" name="J. Mol. Biol.">
        <title>Characterization of two subunits of Arabidopsis 19S proteasome regulatory complex and its possible interaction with the COP9 complex.</title>
        <authorList>
            <person name="Kwok S.F."/>
            <person name="Staub J.M."/>
            <person name="Deng X.-W."/>
        </authorList>
    </citation>
    <scope>NUCLEOTIDE SEQUENCE [MRNA]</scope>
    <scope>TISSUE SPECIFICITY</scope>
    <scope>SUBCELLULAR LOCATION</scope>
    <source>
        <strain>cv. Columbia</strain>
    </source>
</reference>
<reference key="2">
    <citation type="journal article" date="1999" name="Plant J.">
        <title>Structural and functional analysis of the six regulatory particle triple-A ATPase subunits from the Arabidopsis 26S proteasome.</title>
        <authorList>
            <person name="Fu H."/>
            <person name="Doelling J.H."/>
            <person name="Rubin D.M."/>
            <person name="Vierstra R.D."/>
        </authorList>
    </citation>
    <scope>NUCLEOTIDE SEQUENCE [MRNA]</scope>
    <scope>GENE FAMILY</scope>
    <scope>NOMENCLATURE</scope>
    <source>
        <strain>cv. Columbia</strain>
    </source>
</reference>
<reference key="3">
    <citation type="journal article" date="2000" name="Nature">
        <title>Sequence and analysis of chromosome 3 of the plant Arabidopsis thaliana.</title>
        <authorList>
            <person name="Salanoubat M."/>
            <person name="Lemcke K."/>
            <person name="Rieger M."/>
            <person name="Ansorge W."/>
            <person name="Unseld M."/>
            <person name="Fartmann B."/>
            <person name="Valle G."/>
            <person name="Bloecker H."/>
            <person name="Perez-Alonso M."/>
            <person name="Obermaier B."/>
            <person name="Delseny M."/>
            <person name="Boutry M."/>
            <person name="Grivell L.A."/>
            <person name="Mache R."/>
            <person name="Puigdomenech P."/>
            <person name="De Simone V."/>
            <person name="Choisne N."/>
            <person name="Artiguenave F."/>
            <person name="Robert C."/>
            <person name="Brottier P."/>
            <person name="Wincker P."/>
            <person name="Cattolico L."/>
            <person name="Weissenbach J."/>
            <person name="Saurin W."/>
            <person name="Quetier F."/>
            <person name="Schaefer M."/>
            <person name="Mueller-Auer S."/>
            <person name="Gabel C."/>
            <person name="Fuchs M."/>
            <person name="Benes V."/>
            <person name="Wurmbach E."/>
            <person name="Drzonek H."/>
            <person name="Erfle H."/>
            <person name="Jordan N."/>
            <person name="Bangert S."/>
            <person name="Wiedelmann R."/>
            <person name="Kranz H."/>
            <person name="Voss H."/>
            <person name="Holland R."/>
            <person name="Brandt P."/>
            <person name="Nyakatura G."/>
            <person name="Vezzi A."/>
            <person name="D'Angelo M."/>
            <person name="Pallavicini A."/>
            <person name="Toppo S."/>
            <person name="Simionati B."/>
            <person name="Conrad A."/>
            <person name="Hornischer K."/>
            <person name="Kauer G."/>
            <person name="Loehnert T.-H."/>
            <person name="Nordsiek G."/>
            <person name="Reichelt J."/>
            <person name="Scharfe M."/>
            <person name="Schoen O."/>
            <person name="Bargues M."/>
            <person name="Terol J."/>
            <person name="Climent J."/>
            <person name="Navarro P."/>
            <person name="Collado C."/>
            <person name="Perez-Perez A."/>
            <person name="Ottenwaelder B."/>
            <person name="Duchemin D."/>
            <person name="Cooke R."/>
            <person name="Laudie M."/>
            <person name="Berger-Llauro C."/>
            <person name="Purnelle B."/>
            <person name="Masuy D."/>
            <person name="de Haan M."/>
            <person name="Maarse A.C."/>
            <person name="Alcaraz J.-P."/>
            <person name="Cottet A."/>
            <person name="Casacuberta E."/>
            <person name="Monfort A."/>
            <person name="Argiriou A."/>
            <person name="Flores M."/>
            <person name="Liguori R."/>
            <person name="Vitale D."/>
            <person name="Mannhaupt G."/>
            <person name="Haase D."/>
            <person name="Schoof H."/>
            <person name="Rudd S."/>
            <person name="Zaccaria P."/>
            <person name="Mewes H.-W."/>
            <person name="Mayer K.F.X."/>
            <person name="Kaul S."/>
            <person name="Town C.D."/>
            <person name="Koo H.L."/>
            <person name="Tallon L.J."/>
            <person name="Jenkins J."/>
            <person name="Rooney T."/>
            <person name="Rizzo M."/>
            <person name="Walts A."/>
            <person name="Utterback T."/>
            <person name="Fujii C.Y."/>
            <person name="Shea T.P."/>
            <person name="Creasy T.H."/>
            <person name="Haas B."/>
            <person name="Maiti R."/>
            <person name="Wu D."/>
            <person name="Peterson J."/>
            <person name="Van Aken S."/>
            <person name="Pai G."/>
            <person name="Militscher J."/>
            <person name="Sellers P."/>
            <person name="Gill J.E."/>
            <person name="Feldblyum T.V."/>
            <person name="Preuss D."/>
            <person name="Lin X."/>
            <person name="Nierman W.C."/>
            <person name="Salzberg S.L."/>
            <person name="White O."/>
            <person name="Venter J.C."/>
            <person name="Fraser C.M."/>
            <person name="Kaneko T."/>
            <person name="Nakamura Y."/>
            <person name="Sato S."/>
            <person name="Kato T."/>
            <person name="Asamizu E."/>
            <person name="Sasamoto S."/>
            <person name="Kimura T."/>
            <person name="Idesawa K."/>
            <person name="Kawashima K."/>
            <person name="Kishida Y."/>
            <person name="Kiyokawa C."/>
            <person name="Kohara M."/>
            <person name="Matsumoto M."/>
            <person name="Matsuno A."/>
            <person name="Muraki A."/>
            <person name="Nakayama S."/>
            <person name="Nakazaki N."/>
            <person name="Shinpo S."/>
            <person name="Takeuchi C."/>
            <person name="Wada T."/>
            <person name="Watanabe A."/>
            <person name="Yamada M."/>
            <person name="Yasuda M."/>
            <person name="Tabata S."/>
        </authorList>
    </citation>
    <scope>NUCLEOTIDE SEQUENCE [LARGE SCALE GENOMIC DNA]</scope>
    <source>
        <strain>cv. Columbia</strain>
    </source>
</reference>
<reference key="4">
    <citation type="journal article" date="2017" name="Plant J.">
        <title>Araport11: a complete reannotation of the Arabidopsis thaliana reference genome.</title>
        <authorList>
            <person name="Cheng C.Y."/>
            <person name="Krishnakumar V."/>
            <person name="Chan A.P."/>
            <person name="Thibaud-Nissen F."/>
            <person name="Schobel S."/>
            <person name="Town C.D."/>
        </authorList>
    </citation>
    <scope>GENOME REANNOTATION</scope>
    <source>
        <strain>cv. Columbia</strain>
    </source>
</reference>
<reference key="5">
    <citation type="journal article" date="2003" name="Science">
        <title>Empirical analysis of transcriptional activity in the Arabidopsis genome.</title>
        <authorList>
            <person name="Yamada K."/>
            <person name="Lim J."/>
            <person name="Dale J.M."/>
            <person name="Chen H."/>
            <person name="Shinn P."/>
            <person name="Palm C.J."/>
            <person name="Southwick A.M."/>
            <person name="Wu H.C."/>
            <person name="Kim C.J."/>
            <person name="Nguyen M."/>
            <person name="Pham P.K."/>
            <person name="Cheuk R.F."/>
            <person name="Karlin-Newmann G."/>
            <person name="Liu S.X."/>
            <person name="Lam B."/>
            <person name="Sakano H."/>
            <person name="Wu T."/>
            <person name="Yu G."/>
            <person name="Miranda M."/>
            <person name="Quach H.L."/>
            <person name="Tripp M."/>
            <person name="Chang C.H."/>
            <person name="Lee J.M."/>
            <person name="Toriumi M.J."/>
            <person name="Chan M.M."/>
            <person name="Tang C.C."/>
            <person name="Onodera C.S."/>
            <person name="Deng J.M."/>
            <person name="Akiyama K."/>
            <person name="Ansari Y."/>
            <person name="Arakawa T."/>
            <person name="Banh J."/>
            <person name="Banno F."/>
            <person name="Bowser L."/>
            <person name="Brooks S.Y."/>
            <person name="Carninci P."/>
            <person name="Chao Q."/>
            <person name="Choy N."/>
            <person name="Enju A."/>
            <person name="Goldsmith A.D."/>
            <person name="Gurjal M."/>
            <person name="Hansen N.F."/>
            <person name="Hayashizaki Y."/>
            <person name="Johnson-Hopson C."/>
            <person name="Hsuan V.W."/>
            <person name="Iida K."/>
            <person name="Karnes M."/>
            <person name="Khan S."/>
            <person name="Koesema E."/>
            <person name="Ishida J."/>
            <person name="Jiang P.X."/>
            <person name="Jones T."/>
            <person name="Kawai J."/>
            <person name="Kamiya A."/>
            <person name="Meyers C."/>
            <person name="Nakajima M."/>
            <person name="Narusaka M."/>
            <person name="Seki M."/>
            <person name="Sakurai T."/>
            <person name="Satou M."/>
            <person name="Tamse R."/>
            <person name="Vaysberg M."/>
            <person name="Wallender E.K."/>
            <person name="Wong C."/>
            <person name="Yamamura Y."/>
            <person name="Yuan S."/>
            <person name="Shinozaki K."/>
            <person name="Davis R.W."/>
            <person name="Theologis A."/>
            <person name="Ecker J.R."/>
        </authorList>
    </citation>
    <scope>NUCLEOTIDE SEQUENCE [LARGE SCALE MRNA]</scope>
    <source>
        <strain>cv. Columbia</strain>
    </source>
</reference>
<reference key="6">
    <citation type="journal article" date="2004" name="J. Biol. Chem.">
        <title>Purification of the Arabidopsis 26 S proteasome: biochemical and molecular analyses revealed the presence of multiple isoforms.</title>
        <authorList>
            <person name="Yang P."/>
            <person name="Fu H."/>
            <person name="Walker J."/>
            <person name="Papa C.M."/>
            <person name="Smalle J."/>
            <person name="Ju Y.-M."/>
            <person name="Vierstra R.D."/>
        </authorList>
    </citation>
    <scope>SUBUNIT</scope>
    <scope>IDENTIFICATION BY MASS SPECTROMETRY</scope>
</reference>
<reference key="7">
    <citation type="journal article" date="2009" name="Plant Cell">
        <title>The Arabidopsis proteasome RPT5 subunits are essential for gametophyte development and show accession-dependent redundancy.</title>
        <authorList>
            <person name="Gallois J.-L."/>
            <person name="Guyon-Debast A."/>
            <person name="Lecureuil A."/>
            <person name="Vezon D."/>
            <person name="Carpentier V."/>
            <person name="Bonhomme S."/>
            <person name="Guerche P."/>
        </authorList>
    </citation>
    <scope>DISRUPTION PHENOTYPE</scope>
    <scope>FUNCTION</scope>
</reference>
<reference key="8">
    <citation type="journal article" date="2010" name="J. Biol. Chem.">
        <title>Affinity purification of the Arabidopsis 26 S proteasome reveals a diverse array of plant proteolytic complexes.</title>
        <authorList>
            <person name="Book A.J."/>
            <person name="Gladman N.P."/>
            <person name="Lee S.S."/>
            <person name="Scalf M."/>
            <person name="Smith L.M."/>
            <person name="Vierstra R.D."/>
        </authorList>
    </citation>
    <scope>IDENTIFICATION BY MASS SPECTROMETRY</scope>
    <scope>CHARACTERIZATION OF THE 26S PROTEASOME COMPLEX</scope>
    <scope>SUBUNIT</scope>
    <scope>ACETYLATION AT THR-278</scope>
    <scope>UBIQUITINATION AT LYS-279 AND LYS-416</scope>
    <scope>CLEAVAGE OF INITIATOR METHIONINE</scope>
</reference>
<reference key="9">
    <citation type="journal article" date="2011" name="Biosci. Biotechnol. Biochem.">
        <title>Arabidopsis thaliana 26S proteasome subunits RPT2a and RPT5a are crucial for zinc deficiency-tolerance.</title>
        <authorList>
            <person name="Sakamoto T."/>
            <person name="Kamiya T."/>
            <person name="Sako K."/>
            <person name="Yamaguchi J."/>
            <person name="Yamagami M."/>
            <person name="Fujiwara T."/>
        </authorList>
    </citation>
    <scope>FUNCTION</scope>
</reference>
<reference key="10">
    <citation type="journal article" date="2012" name="Mol. Cell. Proteomics">
        <title>Comparative large-scale characterisation of plant vs. mammal proteins reveals similar and idiosyncratic N-alpha acetylation features.</title>
        <authorList>
            <person name="Bienvenut W.V."/>
            <person name="Sumpton D."/>
            <person name="Martinez A."/>
            <person name="Lilla S."/>
            <person name="Espagne C."/>
            <person name="Meinnel T."/>
            <person name="Giglione C."/>
        </authorList>
    </citation>
    <scope>ACETYLATION [LARGE SCALE ANALYSIS] AT ALA-2</scope>
    <scope>CLEAVAGE OF INITIATOR METHIONINE [LARGE SCALE ANALYSIS]</scope>
    <scope>IDENTIFICATION BY MASS SPECTROMETRY [LARGE SCALE ANALYSIS]</scope>
</reference>
<reference key="11">
    <citation type="journal article" date="2014" name="J. Proteome Res.">
        <title>Proteomic analysis of the 26S proteasome reveals its direct interaction with transit peptides of plastid protein precursors for their degradation.</title>
        <authorList>
            <person name="Sako K."/>
            <person name="Yanagawa Y."/>
            <person name="Kanai T."/>
            <person name="Sato T."/>
            <person name="Seki M."/>
            <person name="Fujiwara M."/>
            <person name="Fukao Y."/>
            <person name="Yamaguchi J."/>
        </authorList>
    </citation>
    <scope>FUNCTION</scope>
</reference>
<comment type="function">
    <text evidence="6 8 9 13">The 26S proteasome is involved in the ATP-dependent degradation of ubiquitinated proteins. The regulatory (or ATPase) complex confers ATP dependency and substrate specificity to the 26S complex (Probable). Interacts with transit peptides of proteins targeted to the chloroplast, and may be involved in the degradation of unimported plastid protein precursors (PubMed:24846764). Plays a essential role in the gametophyte development (PubMed:19223514). Involved in tolerance to zinc deficiency, possibly through alleviation of oxidative stresses or processing of poly-ubiquitinated proteins (PubMed:21389614).</text>
</comment>
<comment type="subunit">
    <text evidence="5 7">Component of the 19S regulatory particle (RP/PA700) base subcomplex of the 26S proteasome. The 26S proteasome is composed of a core protease (CP), known as the 20S proteasome, capped at one or both ends by the 19S regulatory particle (RP/PA700). The RP/PA700 complex is composed of at least 17 different subunits in two subcomplexes, the base and the lid, which form the portions proximal and distal to the 20S proteolytic core, respectively.</text>
</comment>
<comment type="subcellular location">
    <subcellularLocation>
        <location evidence="10">Cytoplasm</location>
    </subcellularLocation>
    <subcellularLocation>
        <location evidence="10">Nucleus</location>
    </subcellularLocation>
</comment>
<comment type="tissue specificity">
    <text evidence="10">Ubiquitous.</text>
</comment>
<comment type="disruption phenotype">
    <text evidence="6">Displays a severe male gametophyte development defects in cv. Wassilewskija but not in cv. Columbia due to the complementation by RPT5B.</text>
</comment>
<comment type="similarity">
    <text evidence="13">Belongs to the AAA ATPase family.</text>
</comment>
<accession>Q9SEI2</accession>
<accession>Q8H195</accession>
<accession>Q9SWY7</accession>
<protein>
    <recommendedName>
        <fullName evidence="13">26S proteasome regulatory subunit 6A homolog A</fullName>
    </recommendedName>
    <alternativeName>
        <fullName evidence="11">26S proteasome AAA-ATPase subunit RPT5a</fullName>
    </alternativeName>
    <alternativeName>
        <fullName evidence="13">Proteasome 26S subunit 6A homolog A</fullName>
    </alternativeName>
    <alternativeName>
        <fullName evidence="13">Regulatory particle triple-A ATPase subunit 5a</fullName>
    </alternativeName>
    <alternativeName>
        <fullName>Tat-binding protein 1 homolog A</fullName>
        <shortName>TBP-1 homolog A</shortName>
    </alternativeName>
</protein>
<dbReference type="EMBL" id="AF081573">
    <property type="protein sequence ID" value="AAD46145.1"/>
    <property type="molecule type" value="mRNA"/>
</dbReference>
<dbReference type="EMBL" id="AF123394">
    <property type="protein sequence ID" value="AAF22525.1"/>
    <property type="molecule type" value="mRNA"/>
</dbReference>
<dbReference type="EMBL" id="AC009606">
    <property type="protein sequence ID" value="AAF64530.1"/>
    <property type="molecule type" value="Genomic_DNA"/>
</dbReference>
<dbReference type="EMBL" id="CP002686">
    <property type="protein sequence ID" value="AEE74254.1"/>
    <property type="molecule type" value="Genomic_DNA"/>
</dbReference>
<dbReference type="EMBL" id="AY062705">
    <property type="protein sequence ID" value="AAL32783.1"/>
    <property type="molecule type" value="mRNA"/>
</dbReference>
<dbReference type="EMBL" id="BT000140">
    <property type="protein sequence ID" value="AAN15459.1"/>
    <property type="molecule type" value="mRNA"/>
</dbReference>
<dbReference type="RefSeq" id="NP_187204.1">
    <property type="nucleotide sequence ID" value="NM_111426.4"/>
</dbReference>
<dbReference type="SMR" id="Q9SEI2"/>
<dbReference type="BioGRID" id="5053">
    <property type="interactions" value="94"/>
</dbReference>
<dbReference type="FunCoup" id="Q9SEI2">
    <property type="interactions" value="4651"/>
</dbReference>
<dbReference type="IntAct" id="Q9SEI2">
    <property type="interactions" value="5"/>
</dbReference>
<dbReference type="STRING" id="3702.Q9SEI2"/>
<dbReference type="iPTMnet" id="Q9SEI2"/>
<dbReference type="PaxDb" id="3702-AT3G05530.1"/>
<dbReference type="ProteomicsDB" id="226384"/>
<dbReference type="EnsemblPlants" id="AT3G05530.1">
    <property type="protein sequence ID" value="AT3G05530.1"/>
    <property type="gene ID" value="AT3G05530"/>
</dbReference>
<dbReference type="GeneID" id="819718"/>
<dbReference type="Gramene" id="AT3G05530.1">
    <property type="protein sequence ID" value="AT3G05530.1"/>
    <property type="gene ID" value="AT3G05530"/>
</dbReference>
<dbReference type="KEGG" id="ath:AT3G05530"/>
<dbReference type="Araport" id="AT3G05530"/>
<dbReference type="TAIR" id="AT3G05530">
    <property type="gene designation" value="RPT5A"/>
</dbReference>
<dbReference type="eggNOG" id="KOG0652">
    <property type="taxonomic scope" value="Eukaryota"/>
</dbReference>
<dbReference type="HOGENOM" id="CLU_000688_2_4_1"/>
<dbReference type="InParanoid" id="Q9SEI2"/>
<dbReference type="OMA" id="NKISHEH"/>
<dbReference type="OrthoDB" id="1054102at2759"/>
<dbReference type="PhylomeDB" id="Q9SEI2"/>
<dbReference type="PRO" id="PR:Q9SEI2"/>
<dbReference type="Proteomes" id="UP000006548">
    <property type="component" value="Chromosome 3"/>
</dbReference>
<dbReference type="ExpressionAtlas" id="Q9SEI2">
    <property type="expression patterns" value="baseline and differential"/>
</dbReference>
<dbReference type="GO" id="GO:0005737">
    <property type="term" value="C:cytoplasm"/>
    <property type="evidence" value="ECO:0007005"/>
    <property type="project" value="TAIR"/>
</dbReference>
<dbReference type="GO" id="GO:0005829">
    <property type="term" value="C:cytosol"/>
    <property type="evidence" value="ECO:0007005"/>
    <property type="project" value="TAIR"/>
</dbReference>
<dbReference type="GO" id="GO:0005634">
    <property type="term" value="C:nucleus"/>
    <property type="evidence" value="ECO:0007005"/>
    <property type="project" value="TAIR"/>
</dbReference>
<dbReference type="GO" id="GO:0000502">
    <property type="term" value="C:proteasome complex"/>
    <property type="evidence" value="ECO:0000314"/>
    <property type="project" value="TAIR"/>
</dbReference>
<dbReference type="GO" id="GO:0005524">
    <property type="term" value="F:ATP binding"/>
    <property type="evidence" value="ECO:0007669"/>
    <property type="project" value="UniProtKB-KW"/>
</dbReference>
<dbReference type="GO" id="GO:0016887">
    <property type="term" value="F:ATP hydrolysis activity"/>
    <property type="evidence" value="ECO:0007669"/>
    <property type="project" value="InterPro"/>
</dbReference>
<dbReference type="GO" id="GO:0009553">
    <property type="term" value="P:embryo sac development"/>
    <property type="evidence" value="ECO:0000316"/>
    <property type="project" value="TAIR"/>
</dbReference>
<dbReference type="GO" id="GO:0009555">
    <property type="term" value="P:pollen development"/>
    <property type="evidence" value="ECO:0000316"/>
    <property type="project" value="TAIR"/>
</dbReference>
<dbReference type="GO" id="GO:0010498">
    <property type="term" value="P:proteasomal protein catabolic process"/>
    <property type="evidence" value="ECO:0000316"/>
    <property type="project" value="TAIR"/>
</dbReference>
<dbReference type="FunFam" id="1.10.8.60:FF:000009">
    <property type="entry name" value="26S protease regulatory subunit 6A"/>
    <property type="match status" value="1"/>
</dbReference>
<dbReference type="FunFam" id="2.40.50.140:FF:000076">
    <property type="entry name" value="26S protease regulatory subunit 6A"/>
    <property type="match status" value="1"/>
</dbReference>
<dbReference type="FunFam" id="3.40.50.300:FF:000037">
    <property type="entry name" value="26S protease regulatory subunit 6A"/>
    <property type="match status" value="1"/>
</dbReference>
<dbReference type="Gene3D" id="1.10.8.60">
    <property type="match status" value="1"/>
</dbReference>
<dbReference type="Gene3D" id="2.40.50.140">
    <property type="entry name" value="Nucleic acid-binding proteins"/>
    <property type="match status" value="1"/>
</dbReference>
<dbReference type="Gene3D" id="3.40.50.300">
    <property type="entry name" value="P-loop containing nucleotide triphosphate hydrolases"/>
    <property type="match status" value="1"/>
</dbReference>
<dbReference type="InterPro" id="IPR050221">
    <property type="entry name" value="26S_Proteasome_ATPase"/>
</dbReference>
<dbReference type="InterPro" id="IPR003593">
    <property type="entry name" value="AAA+_ATPase"/>
</dbReference>
<dbReference type="InterPro" id="IPR041569">
    <property type="entry name" value="AAA_lid_3"/>
</dbReference>
<dbReference type="InterPro" id="IPR003959">
    <property type="entry name" value="ATPase_AAA_core"/>
</dbReference>
<dbReference type="InterPro" id="IPR003960">
    <property type="entry name" value="ATPase_AAA_CS"/>
</dbReference>
<dbReference type="InterPro" id="IPR012340">
    <property type="entry name" value="NA-bd_OB-fold"/>
</dbReference>
<dbReference type="InterPro" id="IPR027417">
    <property type="entry name" value="P-loop_NTPase"/>
</dbReference>
<dbReference type="InterPro" id="IPR032501">
    <property type="entry name" value="Prot_ATP_ID_OB_2nd"/>
</dbReference>
<dbReference type="PANTHER" id="PTHR23073">
    <property type="entry name" value="26S PROTEASOME REGULATORY SUBUNIT"/>
    <property type="match status" value="1"/>
</dbReference>
<dbReference type="Pfam" id="PF00004">
    <property type="entry name" value="AAA"/>
    <property type="match status" value="1"/>
</dbReference>
<dbReference type="Pfam" id="PF17862">
    <property type="entry name" value="AAA_lid_3"/>
    <property type="match status" value="1"/>
</dbReference>
<dbReference type="Pfam" id="PF16450">
    <property type="entry name" value="Prot_ATP_ID_OB_C"/>
    <property type="match status" value="1"/>
</dbReference>
<dbReference type="SMART" id="SM00382">
    <property type="entry name" value="AAA"/>
    <property type="match status" value="1"/>
</dbReference>
<dbReference type="SUPFAM" id="SSF52540">
    <property type="entry name" value="P-loop containing nucleoside triphosphate hydrolases"/>
    <property type="match status" value="1"/>
</dbReference>
<dbReference type="PROSITE" id="PS00674">
    <property type="entry name" value="AAA"/>
    <property type="match status" value="1"/>
</dbReference>
<proteinExistence type="evidence at protein level"/>
<feature type="initiator methionine" description="Removed" evidence="7 16">
    <location>
        <position position="1"/>
    </location>
</feature>
<feature type="chain" id="PRO_0000391485" description="26S proteasome regulatory subunit 6A homolog A">
    <location>
        <begin position="2"/>
        <end position="424"/>
    </location>
</feature>
<feature type="region of interest" description="Disordered" evidence="4">
    <location>
        <begin position="1"/>
        <end position="21"/>
    </location>
</feature>
<feature type="binding site" evidence="3">
    <location>
        <begin position="212"/>
        <end position="219"/>
    </location>
    <ligand>
        <name>ATP</name>
        <dbReference type="ChEBI" id="CHEBI:30616"/>
    </ligand>
</feature>
<feature type="modified residue" description="N-acetylalanine" evidence="16">
    <location>
        <position position="2"/>
    </location>
</feature>
<feature type="modified residue" description="Phosphoserine" evidence="2">
    <location>
        <position position="19"/>
    </location>
</feature>
<feature type="modified residue" description="O-acetylthreonine" evidence="7">
    <location>
        <position position="278"/>
    </location>
</feature>
<feature type="cross-link" description="Glycyl lysine isopeptide (Lys-Gly) (interchain with G-Cter in ubiquitin)" evidence="1">
    <location>
        <position position="235"/>
    </location>
</feature>
<feature type="cross-link" description="Glycyl lysine isopeptide (Lys-Gly) (interchain with G-Cter in ubiquitin)" evidence="7">
    <location>
        <position position="279"/>
    </location>
</feature>
<feature type="cross-link" description="Glycyl lysine isopeptide (Lys-Gly) (interchain with G-Cter in ubiquitin)" evidence="7">
    <location>
        <position position="416"/>
    </location>
</feature>
<feature type="sequence conflict" description="In Ref. 5; AAN15459." evidence="13" ref="5">
    <original>D</original>
    <variation>Y</variation>
    <location>
        <position position="271"/>
    </location>
</feature>
<feature type="sequence conflict" description="In Ref. 1; AAD46145." evidence="13" ref="1">
    <original>N</original>
    <variation>H</variation>
    <location>
        <position position="365"/>
    </location>
</feature>
<feature type="sequence conflict" description="In Ref. 1; AAD46145." evidence="13" ref="1">
    <original>N</original>
    <variation>H</variation>
    <location>
        <position position="377"/>
    </location>
</feature>
<organism>
    <name type="scientific">Arabidopsis thaliana</name>
    <name type="common">Mouse-ear cress</name>
    <dbReference type="NCBI Taxonomy" id="3702"/>
    <lineage>
        <taxon>Eukaryota</taxon>
        <taxon>Viridiplantae</taxon>
        <taxon>Streptophyta</taxon>
        <taxon>Embryophyta</taxon>
        <taxon>Tracheophyta</taxon>
        <taxon>Spermatophyta</taxon>
        <taxon>Magnoliopsida</taxon>
        <taxon>eudicotyledons</taxon>
        <taxon>Gunneridae</taxon>
        <taxon>Pentapetalae</taxon>
        <taxon>rosids</taxon>
        <taxon>malvids</taxon>
        <taxon>Brassicales</taxon>
        <taxon>Brassicaceae</taxon>
        <taxon>Camelineae</taxon>
        <taxon>Arabidopsis</taxon>
    </lineage>
</organism>